<organism>
    <name type="scientific">Mycobacterium tuberculosis (strain ATCC 25618 / H37Rv)</name>
    <dbReference type="NCBI Taxonomy" id="83332"/>
    <lineage>
        <taxon>Bacteria</taxon>
        <taxon>Bacillati</taxon>
        <taxon>Actinomycetota</taxon>
        <taxon>Actinomycetes</taxon>
        <taxon>Mycobacteriales</taxon>
        <taxon>Mycobacteriaceae</taxon>
        <taxon>Mycobacterium</taxon>
        <taxon>Mycobacterium tuberculosis complex</taxon>
    </lineage>
</organism>
<gene>
    <name type="ordered locus">Rv0796</name>
    <name type="ORF">MTV042.06</name>
</gene>
<gene>
    <name type="ordered locus">Rv1369c</name>
    <name type="ORF">MTCY02B12.03c</name>
</gene>
<gene>
    <name type="ordered locus">Rv1756c</name>
    <name type="ORF">MTCY28.22c</name>
</gene>
<gene>
    <name type="ordered locus">Rv1764</name>
    <name type="ORF">MTCY28.30</name>
</gene>
<gene>
    <name type="ordered locus">Rv2106</name>
    <name type="ORF">MTCY261.02</name>
</gene>
<gene>
    <name type="ordered locus">Rv2167c</name>
    <name type="ORF">MTCY270.01</name>
</gene>
<gene>
    <name type="ordered locus">Rv2279</name>
    <name type="ORF">MTCY339.31c</name>
</gene>
<gene>
    <name type="ordered locus">Rv2355</name>
    <name type="ORF">MTCY98.24</name>
</gene>
<gene>
    <name type="ordered locus">Rv2479c</name>
    <name type="ORF">MTV008.35c</name>
</gene>
<gene>
    <name type="ordered locus">Rv2649</name>
    <name type="ORF">MTCY441.18</name>
</gene>
<gene>
    <name type="ordered locus">Rv2814c</name>
    <name type="ORF">MTCY16B7.29</name>
</gene>
<gene>
    <name type="ordered locus">Rv3185</name>
    <name type="ORF">MTV014.29</name>
</gene>
<gene>
    <name type="ordered locus">Rv3187</name>
    <name type="ORF">MTV014.31</name>
</gene>
<gene>
    <name type="ordered locus">Rv3326</name>
    <name type="ORF">MTV016.26</name>
</gene>
<gene>
    <name type="ordered locus">Rv3380c</name>
    <name type="ORF">MTV004.38c</name>
</gene>
<gene>
    <name type="ordered locus">Rv3475</name>
    <name type="ORF">MTCY13E12.28</name>
</gene>
<keyword id="KW-0233">DNA recombination</keyword>
<keyword id="KW-0238">DNA-binding</keyword>
<keyword id="KW-1185">Reference proteome</keyword>
<keyword id="KW-0814">Transposable element</keyword>
<keyword id="KW-0815">Transposition</keyword>
<name>TRA9_MYCTU</name>
<dbReference type="EMBL" id="X52471">
    <property type="protein sequence ID" value="CAA36710.1"/>
    <property type="molecule type" value="Genomic_DNA"/>
</dbReference>
<dbReference type="EMBL" id="AL123456">
    <property type="protein sequence ID" value="CCP43544.1"/>
    <property type="status" value="ALT_INIT"/>
    <property type="molecule type" value="Genomic_DNA"/>
</dbReference>
<dbReference type="EMBL" id="AL123456">
    <property type="protein sequence ID" value="CCP44128.1"/>
    <property type="status" value="ALT_INIT"/>
    <property type="molecule type" value="Genomic_DNA"/>
</dbReference>
<dbReference type="EMBL" id="AL123456">
    <property type="protein sequence ID" value="CCP44522.1"/>
    <property type="status" value="ALT_INIT"/>
    <property type="molecule type" value="Genomic_DNA"/>
</dbReference>
<dbReference type="EMBL" id="AL123456">
    <property type="protein sequence ID" value="CCP44530.1"/>
    <property type="status" value="ALT_INIT"/>
    <property type="molecule type" value="Genomic_DNA"/>
</dbReference>
<dbReference type="EMBL" id="AL123456">
    <property type="protein sequence ID" value="CCP44881.1"/>
    <property type="status" value="ALT_INIT"/>
    <property type="molecule type" value="Genomic_DNA"/>
</dbReference>
<dbReference type="EMBL" id="AL123456">
    <property type="protein sequence ID" value="CCP44944.1"/>
    <property type="status" value="ALT_INIT"/>
    <property type="molecule type" value="Genomic_DNA"/>
</dbReference>
<dbReference type="EMBL" id="AL123456">
    <property type="protein sequence ID" value="CCP45061.1"/>
    <property type="status" value="ALT_INIT"/>
    <property type="molecule type" value="Genomic_DNA"/>
</dbReference>
<dbReference type="EMBL" id="AL123456">
    <property type="protein sequence ID" value="CCP45143.1"/>
    <property type="status" value="ALT_INIT"/>
    <property type="molecule type" value="Genomic_DNA"/>
</dbReference>
<dbReference type="EMBL" id="AL123456">
    <property type="protein sequence ID" value="CCP45273.1"/>
    <property type="status" value="ALT_INIT"/>
    <property type="molecule type" value="Genomic_DNA"/>
</dbReference>
<dbReference type="EMBL" id="AL123456">
    <property type="protein sequence ID" value="CCP45447.1"/>
    <property type="status" value="ALT_INIT"/>
    <property type="molecule type" value="Genomic_DNA"/>
</dbReference>
<dbReference type="EMBL" id="AL123456">
    <property type="protein sequence ID" value="CCP45614.1"/>
    <property type="status" value="ALT_INIT"/>
    <property type="molecule type" value="Genomic_DNA"/>
</dbReference>
<dbReference type="EMBL" id="AL123456">
    <property type="protein sequence ID" value="CCP45996.1"/>
    <property type="status" value="ALT_INIT"/>
    <property type="molecule type" value="Genomic_DNA"/>
</dbReference>
<dbReference type="EMBL" id="AL123456">
    <property type="protein sequence ID" value="CCP45998.1"/>
    <property type="status" value="ALT_INIT"/>
    <property type="molecule type" value="Genomic_DNA"/>
</dbReference>
<dbReference type="EMBL" id="AL123456">
    <property type="protein sequence ID" value="CCP46147.1"/>
    <property type="status" value="ALT_INIT"/>
    <property type="molecule type" value="Genomic_DNA"/>
</dbReference>
<dbReference type="EMBL" id="AL123456">
    <property type="protein sequence ID" value="CCP46201.1"/>
    <property type="status" value="ALT_INIT"/>
    <property type="molecule type" value="Genomic_DNA"/>
</dbReference>
<dbReference type="EMBL" id="AL123456">
    <property type="protein sequence ID" value="CCP46297.1"/>
    <property type="status" value="ALT_INIT"/>
    <property type="molecule type" value="Genomic_DNA"/>
</dbReference>
<dbReference type="PIR" id="H70567">
    <property type="entry name" value="H70567"/>
</dbReference>
<dbReference type="SMR" id="P9WKH9"/>
<dbReference type="FunCoup" id="P9WKH9">
    <property type="interactions" value="10"/>
</dbReference>
<dbReference type="STRING" id="83332.Rv0796"/>
<dbReference type="PaxDb" id="83332-Rv0796"/>
<dbReference type="TubercuList" id="Rv0796"/>
<dbReference type="TubercuList" id="Rv1369c"/>
<dbReference type="TubercuList" id="Rv1756c"/>
<dbReference type="TubercuList" id="Rv1764"/>
<dbReference type="TubercuList" id="Rv2106"/>
<dbReference type="TubercuList" id="Rv2167c"/>
<dbReference type="TubercuList" id="Rv2279"/>
<dbReference type="TubercuList" id="Rv2355"/>
<dbReference type="TubercuList" id="Rv2479c"/>
<dbReference type="TubercuList" id="Rv2649"/>
<dbReference type="TubercuList" id="Rv2814c"/>
<dbReference type="TubercuList" id="Rv3185"/>
<dbReference type="TubercuList" id="Rv3187"/>
<dbReference type="TubercuList" id="Rv3326"/>
<dbReference type="TubercuList" id="Rv3380c"/>
<dbReference type="TubercuList" id="Rv3475"/>
<dbReference type="eggNOG" id="COG2801">
    <property type="taxonomic scope" value="Bacteria"/>
</dbReference>
<dbReference type="InParanoid" id="P9WKH9"/>
<dbReference type="Proteomes" id="UP000001584">
    <property type="component" value="Chromosome"/>
</dbReference>
<dbReference type="GO" id="GO:0005886">
    <property type="term" value="C:plasma membrane"/>
    <property type="evidence" value="ECO:0007005"/>
    <property type="project" value="MTBBASE"/>
</dbReference>
<dbReference type="GO" id="GO:0003677">
    <property type="term" value="F:DNA binding"/>
    <property type="evidence" value="ECO:0007669"/>
    <property type="project" value="UniProtKB-KW"/>
</dbReference>
<dbReference type="GO" id="GO:0015074">
    <property type="term" value="P:DNA integration"/>
    <property type="evidence" value="ECO:0007669"/>
    <property type="project" value="InterPro"/>
</dbReference>
<dbReference type="GO" id="GO:0006310">
    <property type="term" value="P:DNA recombination"/>
    <property type="evidence" value="ECO:0007669"/>
    <property type="project" value="UniProtKB-KW"/>
</dbReference>
<dbReference type="GO" id="GO:0032196">
    <property type="term" value="P:transposition"/>
    <property type="evidence" value="ECO:0007669"/>
    <property type="project" value="UniProtKB-KW"/>
</dbReference>
<dbReference type="FunFam" id="3.30.420.10:FF:000111">
    <property type="entry name" value="IS3-like element IS987 family transposase"/>
    <property type="match status" value="1"/>
</dbReference>
<dbReference type="Gene3D" id="3.30.420.10">
    <property type="entry name" value="Ribonuclease H-like superfamily/Ribonuclease H"/>
    <property type="match status" value="1"/>
</dbReference>
<dbReference type="InterPro" id="IPR025948">
    <property type="entry name" value="HTH-like_dom"/>
</dbReference>
<dbReference type="InterPro" id="IPR001584">
    <property type="entry name" value="Integrase_cat-core"/>
</dbReference>
<dbReference type="InterPro" id="IPR012337">
    <property type="entry name" value="RNaseH-like_sf"/>
</dbReference>
<dbReference type="InterPro" id="IPR036397">
    <property type="entry name" value="RNaseH_sf"/>
</dbReference>
<dbReference type="InterPro" id="IPR048020">
    <property type="entry name" value="Transpos_IS3"/>
</dbReference>
<dbReference type="InterPro" id="IPR050900">
    <property type="entry name" value="Transposase_IS3/IS150/IS904"/>
</dbReference>
<dbReference type="NCBIfam" id="NF033516">
    <property type="entry name" value="transpos_IS3"/>
    <property type="match status" value="1"/>
</dbReference>
<dbReference type="PANTHER" id="PTHR46889">
    <property type="entry name" value="TRANSPOSASE INSF FOR INSERTION SEQUENCE IS3B-RELATED"/>
    <property type="match status" value="1"/>
</dbReference>
<dbReference type="PANTHER" id="PTHR46889:SF4">
    <property type="entry name" value="TRANSPOSASE INSO FOR INSERTION SEQUENCE ELEMENT IS911B-RELATED"/>
    <property type="match status" value="1"/>
</dbReference>
<dbReference type="Pfam" id="PF13276">
    <property type="entry name" value="HTH_21"/>
    <property type="match status" value="1"/>
</dbReference>
<dbReference type="Pfam" id="PF00665">
    <property type="entry name" value="rve"/>
    <property type="match status" value="1"/>
</dbReference>
<dbReference type="SUPFAM" id="SSF53098">
    <property type="entry name" value="Ribonuclease H-like"/>
    <property type="match status" value="1"/>
</dbReference>
<dbReference type="PROSITE" id="PS50994">
    <property type="entry name" value="INTEGRASE"/>
    <property type="match status" value="1"/>
</dbReference>
<sequence length="278" mass="31369">MPIAPSTYYDHINREPSRRELRDGELKEHISRVHAANYGVYGARKVWLTLNREGIEVARCTVERLMTKLGLSGTTRGKARRTTIADPATARPADLVQRRFGPPAPNRLWVADLTYVSTWAGFAYVAFVTDAYARRILGWRVASTMATSMVLDAIEQAIWTRQQEGVLDLKDVIHHTDRGSQYTSIRFSERLAEAGIQPSVGAVGSSYDNALAETINGLYKTELIKPGKPWRSIEDVELATARWVDWFNHRRLYQYCGDVPPVELEAAYYAQRQRPAAG</sequence>
<feature type="chain" id="PRO_0000075446" description="Putative transposase for insertion sequence element IS986/IS6110">
    <location>
        <begin position="1"/>
        <end position="278"/>
    </location>
</feature>
<feature type="domain" description="Integrase catalytic" evidence="1">
    <location>
        <begin position="101"/>
        <end position="268"/>
    </location>
</feature>
<protein>
    <recommendedName>
        <fullName>Putative transposase for insertion sequence element IS986/IS6110</fullName>
    </recommendedName>
    <alternativeName>
        <fullName>ORFB</fullName>
    </alternativeName>
</protein>
<comment type="function">
    <text>Involved in the transposition of the insertion sequence.</text>
</comment>
<comment type="sequence caution" evidence="2">
    <conflict type="erroneous initiation">
        <sequence resource="EMBL-CDS" id="CCP43544"/>
    </conflict>
    <text>Extended N-terminus.</text>
</comment>
<comment type="sequence caution" evidence="2">
    <conflict type="erroneous initiation">
        <sequence resource="EMBL-CDS" id="CCP44128"/>
    </conflict>
    <text>Extended N-terminus.</text>
</comment>
<comment type="sequence caution" evidence="2">
    <conflict type="erroneous initiation">
        <sequence resource="EMBL-CDS" id="CCP44522"/>
    </conflict>
    <text>Extended N-terminus.</text>
</comment>
<comment type="sequence caution" evidence="2">
    <conflict type="erroneous initiation">
        <sequence resource="EMBL-CDS" id="CCP44530"/>
    </conflict>
    <text>Extended N-terminus.</text>
</comment>
<comment type="sequence caution" evidence="2">
    <conflict type="erroneous initiation">
        <sequence resource="EMBL-CDS" id="CCP44881"/>
    </conflict>
    <text>Extended N-terminus.</text>
</comment>
<comment type="sequence caution" evidence="2">
    <conflict type="erroneous initiation">
        <sequence resource="EMBL-CDS" id="CCP44944"/>
    </conflict>
    <text>Extended N-terminus.</text>
</comment>
<comment type="sequence caution" evidence="2">
    <conflict type="erroneous initiation">
        <sequence resource="EMBL-CDS" id="CCP45061"/>
    </conflict>
    <text>Extended N-terminus.</text>
</comment>
<comment type="sequence caution" evidence="2">
    <conflict type="erroneous initiation">
        <sequence resource="EMBL-CDS" id="CCP45143"/>
    </conflict>
    <text>Extended N-terminus.</text>
</comment>
<comment type="sequence caution" evidence="2">
    <conflict type="erroneous initiation">
        <sequence resource="EMBL-CDS" id="CCP45273"/>
    </conflict>
    <text>Extended N-terminus.</text>
</comment>
<comment type="sequence caution" evidence="2">
    <conflict type="erroneous initiation">
        <sequence resource="EMBL-CDS" id="CCP45447"/>
    </conflict>
    <text>Extended N-terminus.</text>
</comment>
<comment type="sequence caution" evidence="2">
    <conflict type="erroneous initiation">
        <sequence resource="EMBL-CDS" id="CCP45614"/>
    </conflict>
    <text>Extended N-terminus.</text>
</comment>
<comment type="sequence caution" evidence="2">
    <conflict type="erroneous initiation">
        <sequence resource="EMBL-CDS" id="CCP45996"/>
    </conflict>
    <text>Extended N-terminus.</text>
</comment>
<comment type="sequence caution" evidence="2">
    <conflict type="erroneous initiation">
        <sequence resource="EMBL-CDS" id="CCP45998"/>
    </conflict>
    <text>Extended N-terminus.</text>
</comment>
<comment type="sequence caution" evidence="2">
    <conflict type="erroneous initiation">
        <sequence resource="EMBL-CDS" id="CCP46147"/>
    </conflict>
    <text>Extended N-terminus.</text>
</comment>
<comment type="sequence caution" evidence="2">
    <conflict type="erroneous initiation">
        <sequence resource="EMBL-CDS" id="CCP46201"/>
    </conflict>
    <text>Extended N-terminus.</text>
</comment>
<comment type="sequence caution" evidence="2">
    <conflict type="erroneous initiation">
        <sequence resource="EMBL-CDS" id="CCP46297"/>
    </conflict>
    <text>Extended N-terminus.</text>
</comment>
<evidence type="ECO:0000255" key="1">
    <source>
        <dbReference type="PROSITE-ProRule" id="PRU00457"/>
    </source>
</evidence>
<evidence type="ECO:0000305" key="2"/>
<proteinExistence type="predicted"/>
<accession>P9WKH9</accession>
<accession>L0TCB7</accession>
<accession>O08154</accession>
<accession>O08156</accession>
<accession>O08159</accession>
<accession>O33355</accession>
<accession>P0C5G8</accession>
<accession>P19774</accession>
<accession>P75029</accession>
<accession>P97137</accession>
<accession>Q9R378</accession>
<reference key="1">
    <citation type="journal article" date="1990" name="Mol. Microbiol.">
        <title>Characterization of a Mycobacterium tuberculosis insertion sequence belonging to the IS3 family.</title>
        <authorList>
            <person name="McAdam R.A."/>
            <person name="Hermans P.W.M."/>
            <person name="van Soolingen D."/>
            <person name="Zainuddin Z.F."/>
            <person name="Catty D."/>
            <person name="van Embden J.D.A."/>
            <person name="Dale J.W."/>
        </authorList>
    </citation>
    <scope>NUCLEOTIDE SEQUENCE [GENOMIC DNA]</scope>
</reference>
<reference key="2">
    <citation type="journal article" date="1998" name="Nature">
        <title>Deciphering the biology of Mycobacterium tuberculosis from the complete genome sequence.</title>
        <authorList>
            <person name="Cole S.T."/>
            <person name="Brosch R."/>
            <person name="Parkhill J."/>
            <person name="Garnier T."/>
            <person name="Churcher C.M."/>
            <person name="Harris D.E."/>
            <person name="Gordon S.V."/>
            <person name="Eiglmeier K."/>
            <person name="Gas S."/>
            <person name="Barry C.E. III"/>
            <person name="Tekaia F."/>
            <person name="Badcock K."/>
            <person name="Basham D."/>
            <person name="Brown D."/>
            <person name="Chillingworth T."/>
            <person name="Connor R."/>
            <person name="Davies R.M."/>
            <person name="Devlin K."/>
            <person name="Feltwell T."/>
            <person name="Gentles S."/>
            <person name="Hamlin N."/>
            <person name="Holroyd S."/>
            <person name="Hornsby T."/>
            <person name="Jagels K."/>
            <person name="Krogh A."/>
            <person name="McLean J."/>
            <person name="Moule S."/>
            <person name="Murphy L.D."/>
            <person name="Oliver S."/>
            <person name="Osborne J."/>
            <person name="Quail M.A."/>
            <person name="Rajandream M.A."/>
            <person name="Rogers J."/>
            <person name="Rutter S."/>
            <person name="Seeger K."/>
            <person name="Skelton S."/>
            <person name="Squares S."/>
            <person name="Squares R."/>
            <person name="Sulston J.E."/>
            <person name="Taylor K."/>
            <person name="Whitehead S."/>
            <person name="Barrell B.G."/>
        </authorList>
    </citation>
    <scope>NUCLEOTIDE SEQUENCE [LARGE SCALE GENOMIC DNA]</scope>
    <source>
        <strain>ATCC 25618 / H37Rv</strain>
    </source>
</reference>